<accession>A8N513</accession>
<sequence length="1005" mass="110463">MAKETTARSILGYQTLPTTALIALIYVVAFFSVLVSDQLPSIPHPGSKKLKGFDLDLARRDLEHIAARPHPYNSHANDAVREYLLNRLDDIAWGKDHVHLDNDLRSNGSWASPKYGVYFEGTNLLVKIDGTDDDPHTQIPRGVADGVLFSAHYDSVSTAAGATDDGMGVVTLLQLIQYFAENRQRKTAIFNINNGEEDWLNGAHAFLQHPWANLTSTFLNLEGAASGGRPILFRSTSLKPVKAYDDVPHKLRVRHPHANVIFSDAFARGFVRSGTDYSVYTGIDRHGPAAEGGLLREGLDIAFYKGRSRYHTRWDAPAYTEGGERSLWSMIDVARGVGVGLLNPEDSAKQKSKPGVYFDRPVVLALLWAIGAVLKHNAGSPPPPPKPTVPHSANNASAGTGRPGASTRQPTRSFGSNEDANSERGILARIKSVSVKNVLITVWKQASFWIALIVTVGLQALLAWGYVAINPFTIYSRPYFVLLSFFALSFFSMTLVLQAAFPSSPVKHAIEVREQEKTTILLHLHLLSWIALLLSTILIGKSQVGSFYVVTVWYLGIWAATVIGTLQPILVSKRADDKGKRRARRSRSASTSSSSSSSSSSSSGSDTETERPSTQPASERTPLLFGRANGASNRRKTNSKSKEDGAIGWWIAQVLLTVPPVVMLVGQITSIVLEAMNQTLTDGNSAWSIYLLTALLATMLVLPVAPFSPKLHRGLIFLSAAVFVGFTIYLWVVFPFTRQDPFKVFFQQTVSLDREDVFPMNATGNAVTTHGPKIVTELTGNPAYLRRVLPYLPSSREEDITCSPHEVRTGLETCRWKSNRLAPFPGGKDPWSTWDSDAQRTTTDVSFFKADVTRTAWASARFIVQGRNTRNCRLYFDPPEKSGVRVVRYVVHGGAKGMQPGYPVDLVNGVQEIRLWSRTWGKAWEVDVDWETPLGTGEDEGQLAGRIACEWVEYQSAMVDNGSFGPDRQPKIPALEEALTFLPEWVAVSKAADGLVEASAPFTVV</sequence>
<comment type="function">
    <text evidence="1">May be involved in vacuolar sorting and osmoregulation.</text>
</comment>
<comment type="cofactor">
    <cofactor evidence="2">
        <name>Zn(2+)</name>
        <dbReference type="ChEBI" id="CHEBI:29105"/>
    </cofactor>
    <text evidence="2">Binds 2 Zn(2+) ions per subunit.</text>
</comment>
<comment type="subcellular location">
    <subcellularLocation>
        <location evidence="1">Vacuole membrane</location>
        <topology evidence="3">Multi-pass membrane protein</topology>
    </subcellularLocation>
</comment>
<comment type="similarity">
    <text evidence="6">Belongs to the peptidase M28 family.</text>
</comment>
<proteinExistence type="inferred from homology"/>
<reference key="1">
    <citation type="journal article" date="2010" name="Proc. Natl. Acad. Sci. U.S.A.">
        <title>Insights into evolution of multicellular fungi from the assembled chromosomes of the mushroom Coprinopsis cinerea (Coprinus cinereus).</title>
        <authorList>
            <person name="Stajich J.E."/>
            <person name="Wilke S.K."/>
            <person name="Ahren D."/>
            <person name="Au C.H."/>
            <person name="Birren B.W."/>
            <person name="Borodovsky M."/>
            <person name="Burns C."/>
            <person name="Canbaeck B."/>
            <person name="Casselton L.A."/>
            <person name="Cheng C.K."/>
            <person name="Deng J."/>
            <person name="Dietrich F.S."/>
            <person name="Fargo D.C."/>
            <person name="Farman M.L."/>
            <person name="Gathman A.C."/>
            <person name="Goldberg J."/>
            <person name="Guigo R."/>
            <person name="Hoegger P.J."/>
            <person name="Hooker J.B."/>
            <person name="Huggins A."/>
            <person name="James T.Y."/>
            <person name="Kamada T."/>
            <person name="Kilaru S."/>
            <person name="Kodira C."/>
            <person name="Kuees U."/>
            <person name="Kupfer D."/>
            <person name="Kwan H.S."/>
            <person name="Lomsadze A."/>
            <person name="Li W."/>
            <person name="Lilly W.W."/>
            <person name="Ma L.-J."/>
            <person name="Mackey A.J."/>
            <person name="Manning G."/>
            <person name="Martin F."/>
            <person name="Muraguchi H."/>
            <person name="Natvig D.O."/>
            <person name="Palmerini H."/>
            <person name="Ramesh M.A."/>
            <person name="Rehmeyer C.J."/>
            <person name="Roe B.A."/>
            <person name="Shenoy N."/>
            <person name="Stanke M."/>
            <person name="Ter-Hovhannisyan V."/>
            <person name="Tunlid A."/>
            <person name="Velagapudi R."/>
            <person name="Vision T.J."/>
            <person name="Zeng Q."/>
            <person name="Zolan M.E."/>
            <person name="Pukkila P.J."/>
        </authorList>
    </citation>
    <scope>NUCLEOTIDE SEQUENCE [LARGE SCALE GENOMIC DNA]</scope>
    <source>
        <strain>Okayama-7 / 130 / ATCC MYA-4618 / FGSC 9003</strain>
    </source>
</reference>
<dbReference type="EC" id="3.4.-.-" evidence="6"/>
<dbReference type="EMBL" id="AACS02000003">
    <property type="protein sequence ID" value="EAU91824.2"/>
    <property type="molecule type" value="Genomic_DNA"/>
</dbReference>
<dbReference type="RefSeq" id="XP_001829902.2">
    <property type="nucleotide sequence ID" value="XM_001829850.2"/>
</dbReference>
<dbReference type="SMR" id="A8N513"/>
<dbReference type="FunCoup" id="A8N513">
    <property type="interactions" value="8"/>
</dbReference>
<dbReference type="GeneID" id="6006340"/>
<dbReference type="KEGG" id="cci:CC1G_04591"/>
<dbReference type="VEuPathDB" id="FungiDB:CC1G_04591"/>
<dbReference type="eggNOG" id="KOG2194">
    <property type="taxonomic scope" value="Eukaryota"/>
</dbReference>
<dbReference type="HOGENOM" id="CLU_006412_1_0_1"/>
<dbReference type="InParanoid" id="A8N513"/>
<dbReference type="OMA" id="FCHTFVN"/>
<dbReference type="OrthoDB" id="76293at2759"/>
<dbReference type="Proteomes" id="UP000001861">
    <property type="component" value="Unassembled WGS sequence"/>
</dbReference>
<dbReference type="GO" id="GO:0005774">
    <property type="term" value="C:vacuolar membrane"/>
    <property type="evidence" value="ECO:0007669"/>
    <property type="project" value="UniProtKB-SubCell"/>
</dbReference>
<dbReference type="GO" id="GO:0046872">
    <property type="term" value="F:metal ion binding"/>
    <property type="evidence" value="ECO:0007669"/>
    <property type="project" value="UniProtKB-KW"/>
</dbReference>
<dbReference type="GO" id="GO:0008235">
    <property type="term" value="F:metalloexopeptidase activity"/>
    <property type="evidence" value="ECO:0007669"/>
    <property type="project" value="InterPro"/>
</dbReference>
<dbReference type="GO" id="GO:0006508">
    <property type="term" value="P:proteolysis"/>
    <property type="evidence" value="ECO:0007669"/>
    <property type="project" value="UniProtKB-KW"/>
</dbReference>
<dbReference type="CDD" id="cd03875">
    <property type="entry name" value="M28_Fxna_like"/>
    <property type="match status" value="1"/>
</dbReference>
<dbReference type="Gene3D" id="3.40.630.10">
    <property type="entry name" value="Zn peptidases"/>
    <property type="match status" value="1"/>
</dbReference>
<dbReference type="InterPro" id="IPR048024">
    <property type="entry name" value="Fxna-like_M28_dom"/>
</dbReference>
<dbReference type="InterPro" id="IPR045175">
    <property type="entry name" value="M28_fam"/>
</dbReference>
<dbReference type="InterPro" id="IPR007484">
    <property type="entry name" value="Peptidase_M28"/>
</dbReference>
<dbReference type="InterPro" id="IPR053975">
    <property type="entry name" value="PFF1_C"/>
</dbReference>
<dbReference type="InterPro" id="IPR053976">
    <property type="entry name" value="PFF1_TM"/>
</dbReference>
<dbReference type="PANTHER" id="PTHR12147">
    <property type="entry name" value="METALLOPEPTIDASE M28 FAMILY MEMBER"/>
    <property type="match status" value="1"/>
</dbReference>
<dbReference type="PANTHER" id="PTHR12147:SF58">
    <property type="entry name" value="VACUOLAR MEMBRANE PROTEASE"/>
    <property type="match status" value="1"/>
</dbReference>
<dbReference type="Pfam" id="PF04389">
    <property type="entry name" value="Peptidase_M28"/>
    <property type="match status" value="1"/>
</dbReference>
<dbReference type="Pfam" id="PF22250">
    <property type="entry name" value="PFF1_C"/>
    <property type="match status" value="1"/>
</dbReference>
<dbReference type="Pfam" id="PF22251">
    <property type="entry name" value="PFF1_TM"/>
    <property type="match status" value="2"/>
</dbReference>
<dbReference type="SUPFAM" id="SSF53187">
    <property type="entry name" value="Zn-dependent exopeptidases"/>
    <property type="match status" value="1"/>
</dbReference>
<name>PFF1_COPC7</name>
<keyword id="KW-0325">Glycoprotein</keyword>
<keyword id="KW-0378">Hydrolase</keyword>
<keyword id="KW-0472">Membrane</keyword>
<keyword id="KW-0479">Metal-binding</keyword>
<keyword id="KW-0482">Metalloprotease</keyword>
<keyword id="KW-0645">Protease</keyword>
<keyword id="KW-1185">Reference proteome</keyword>
<keyword id="KW-0812">Transmembrane</keyword>
<keyword id="KW-1133">Transmembrane helix</keyword>
<keyword id="KW-0926">Vacuole</keyword>
<keyword id="KW-0862">Zinc</keyword>
<gene>
    <name type="ORF">CC1G_04591</name>
</gene>
<organism>
    <name type="scientific">Coprinopsis cinerea (strain Okayama-7 / 130 / ATCC MYA-4618 / FGSC 9003)</name>
    <name type="common">Inky cap fungus</name>
    <name type="synonym">Hormographiella aspergillata</name>
    <dbReference type="NCBI Taxonomy" id="240176"/>
    <lineage>
        <taxon>Eukaryota</taxon>
        <taxon>Fungi</taxon>
        <taxon>Dikarya</taxon>
        <taxon>Basidiomycota</taxon>
        <taxon>Agaricomycotina</taxon>
        <taxon>Agaricomycetes</taxon>
        <taxon>Agaricomycetidae</taxon>
        <taxon>Agaricales</taxon>
        <taxon>Agaricineae</taxon>
        <taxon>Psathyrellaceae</taxon>
        <taxon>Coprinopsis</taxon>
    </lineage>
</organism>
<protein>
    <recommendedName>
        <fullName evidence="1">Vacuolar membrane protease</fullName>
        <ecNumber evidence="6">3.4.-.-</ecNumber>
    </recommendedName>
    <alternativeName>
        <fullName evidence="1">FXNA-related family protease 1</fullName>
    </alternativeName>
</protein>
<feature type="chain" id="PRO_0000411715" description="Vacuolar membrane protease">
    <location>
        <begin position="1"/>
        <end position="1005"/>
    </location>
</feature>
<feature type="topological domain" description="Cytoplasmic" evidence="1">
    <location>
        <begin position="1"/>
        <end position="14"/>
    </location>
</feature>
<feature type="transmembrane region" description="Helical; Name=1" evidence="3">
    <location>
        <begin position="15"/>
        <end position="35"/>
    </location>
</feature>
<feature type="topological domain" description="Vacuolar" evidence="1">
    <location>
        <begin position="36"/>
        <end position="353"/>
    </location>
</feature>
<feature type="transmembrane region" description="Helical; Name=2" evidence="3">
    <location>
        <begin position="354"/>
        <end position="374"/>
    </location>
</feature>
<feature type="topological domain" description="Cytoplasmic" evidence="1">
    <location>
        <begin position="375"/>
        <end position="448"/>
    </location>
</feature>
<feature type="transmembrane region" description="Helical; Name=3" evidence="3">
    <location>
        <begin position="449"/>
        <end position="469"/>
    </location>
</feature>
<feature type="topological domain" description="Vacuolar" evidence="1">
    <location>
        <begin position="470"/>
        <end position="479"/>
    </location>
</feature>
<feature type="transmembrane region" description="Helical; Name=4" evidence="3">
    <location>
        <begin position="480"/>
        <end position="500"/>
    </location>
</feature>
<feature type="topological domain" description="Cytoplasmic" evidence="1">
    <location>
        <begin position="501"/>
        <end position="519"/>
    </location>
</feature>
<feature type="transmembrane region" description="Helical; Name=5" evidence="3">
    <location>
        <begin position="520"/>
        <end position="540"/>
    </location>
</feature>
<feature type="topological domain" description="Vacuolar" evidence="1">
    <location>
        <begin position="541"/>
        <end position="543"/>
    </location>
</feature>
<feature type="transmembrane region" description="Helical; Name=6" evidence="3">
    <location>
        <begin position="544"/>
        <end position="564"/>
    </location>
</feature>
<feature type="topological domain" description="Cytoplasmic" evidence="1">
    <location>
        <begin position="565"/>
        <end position="644"/>
    </location>
</feature>
<feature type="transmembrane region" description="Helical; Name=7" evidence="3">
    <location>
        <begin position="645"/>
        <end position="665"/>
    </location>
</feature>
<feature type="topological domain" description="Vacuolar" evidence="1">
    <location>
        <begin position="666"/>
        <end position="686"/>
    </location>
</feature>
<feature type="transmembrane region" description="Helical; Name=8" evidence="3">
    <location>
        <begin position="687"/>
        <end position="707"/>
    </location>
</feature>
<feature type="topological domain" description="Cytoplasmic" evidence="1">
    <location>
        <begin position="708"/>
        <end position="713"/>
    </location>
</feature>
<feature type="transmembrane region" description="Helical; Name=9" evidence="3">
    <location>
        <begin position="714"/>
        <end position="734"/>
    </location>
</feature>
<feature type="topological domain" description="Vacuolar" evidence="1">
    <location>
        <begin position="735"/>
        <end position="1005"/>
    </location>
</feature>
<feature type="region of interest" description="Disordered" evidence="5">
    <location>
        <begin position="379"/>
        <end position="420"/>
    </location>
</feature>
<feature type="region of interest" description="Disordered" evidence="5">
    <location>
        <begin position="577"/>
        <end position="640"/>
    </location>
</feature>
<feature type="compositionally biased region" description="Polar residues" evidence="5">
    <location>
        <begin position="406"/>
        <end position="419"/>
    </location>
</feature>
<feature type="compositionally biased region" description="Low complexity" evidence="5">
    <location>
        <begin position="588"/>
        <end position="606"/>
    </location>
</feature>
<feature type="active site" description="Proton acceptor" evidence="2">
    <location>
        <position position="196"/>
    </location>
</feature>
<feature type="binding site" evidence="2">
    <location>
        <position position="152"/>
    </location>
    <ligand>
        <name>Zn(2+)</name>
        <dbReference type="ChEBI" id="CHEBI:29105"/>
        <label>1</label>
        <note>catalytic</note>
    </ligand>
</feature>
<feature type="binding site" evidence="2">
    <location>
        <position position="164"/>
    </location>
    <ligand>
        <name>Zn(2+)</name>
        <dbReference type="ChEBI" id="CHEBI:29105"/>
        <label>1</label>
        <note>catalytic</note>
    </ligand>
</feature>
<feature type="binding site" evidence="2">
    <location>
        <position position="164"/>
    </location>
    <ligand>
        <name>Zn(2+)</name>
        <dbReference type="ChEBI" id="CHEBI:29105"/>
        <label>2</label>
        <note>catalytic</note>
    </ligand>
</feature>
<feature type="binding site" evidence="2">
    <location>
        <position position="197"/>
    </location>
    <ligand>
        <name>Zn(2+)</name>
        <dbReference type="ChEBI" id="CHEBI:29105"/>
        <label>2</label>
        <note>catalytic</note>
    </ligand>
</feature>
<feature type="binding site" evidence="2">
    <location>
        <position position="222"/>
    </location>
    <ligand>
        <name>Zn(2+)</name>
        <dbReference type="ChEBI" id="CHEBI:29105"/>
        <label>1</label>
        <note>catalytic</note>
    </ligand>
</feature>
<feature type="binding site" evidence="2">
    <location>
        <position position="311"/>
    </location>
    <ligand>
        <name>Zn(2+)</name>
        <dbReference type="ChEBI" id="CHEBI:29105"/>
        <label>2</label>
        <note>catalytic</note>
    </ligand>
</feature>
<feature type="site" description="Transition state stabilizer" evidence="2">
    <location>
        <position position="310"/>
    </location>
</feature>
<feature type="glycosylation site" description="N-linked (GlcNAc...) asparagine" evidence="4">
    <location>
        <position position="107"/>
    </location>
</feature>
<feature type="glycosylation site" description="N-linked (GlcNAc...) asparagine" evidence="4">
    <location>
        <position position="213"/>
    </location>
</feature>
<feature type="glycosylation site" description="N-linked (GlcNAc...) asparagine" evidence="4">
    <location>
        <position position="677"/>
    </location>
</feature>
<feature type="glycosylation site" description="N-linked (GlcNAc...) asparagine" evidence="4">
    <location>
        <position position="761"/>
    </location>
</feature>
<feature type="glycosylation site" description="N-linked (GlcNAc...) asparagine" evidence="4">
    <location>
        <position position="961"/>
    </location>
</feature>
<evidence type="ECO:0000250" key="1">
    <source>
        <dbReference type="UniProtKB" id="P38244"/>
    </source>
</evidence>
<evidence type="ECO:0000250" key="2">
    <source>
        <dbReference type="UniProtKB" id="P80561"/>
    </source>
</evidence>
<evidence type="ECO:0000255" key="3"/>
<evidence type="ECO:0000255" key="4">
    <source>
        <dbReference type="PROSITE-ProRule" id="PRU00498"/>
    </source>
</evidence>
<evidence type="ECO:0000256" key="5">
    <source>
        <dbReference type="SAM" id="MobiDB-lite"/>
    </source>
</evidence>
<evidence type="ECO:0000305" key="6"/>